<gene>
    <name type="primary">yghJ</name>
    <name type="ordered locus">ETEC_3241</name>
</gene>
<reference key="1">
    <citation type="journal article" date="2010" name="J. Bacteriol.">
        <title>A commensal gone bad: complete genome sequence of the prototypical enterotoxigenic Escherichia coli strain H10407.</title>
        <authorList>
            <person name="Crossman L.C."/>
            <person name="Chaudhuri R.R."/>
            <person name="Beatson S.A."/>
            <person name="Wells T.J."/>
            <person name="Desvaux M."/>
            <person name="Cunningham A.F."/>
            <person name="Petty N.K."/>
            <person name="Mahon V."/>
            <person name="Brinkley C."/>
            <person name="Hobman J.L."/>
            <person name="Savarino S.J."/>
            <person name="Turner S.M."/>
            <person name="Pallen M.J."/>
            <person name="Penn C.W."/>
            <person name="Parkhill J."/>
            <person name="Turner A.K."/>
            <person name="Johnson T.J."/>
            <person name="Thomson N.R."/>
            <person name="Smith S.G."/>
            <person name="Henderson I.R."/>
        </authorList>
    </citation>
    <scope>NUCLEOTIDE SEQUENCE [LARGE SCALE GENOMIC DNA]</scope>
    <source>
        <strain>H10407 / ETEC</strain>
    </source>
</reference>
<reference key="2">
    <citation type="submission" date="2001-09" db="EMBL/GenBank/DDBJ databases">
        <title>Identification of a type II protein secretory pathway required for the secretion of heat-labile enterotoxin by enterotoxigenic Escherichia coli.</title>
        <authorList>
            <person name="Tauschek M."/>
            <person name="Gorrell R.J."/>
            <person name="Strugnell R.A."/>
            <person name="Robins-Browne R.M."/>
        </authorList>
    </citation>
    <scope>NUCLEOTIDE SEQUENCE [GENOMIC DNA] OF 1320-1519</scope>
    <source>
        <strain>H10407 / ETEC</strain>
    </source>
</reference>
<reference key="3">
    <citation type="journal article" date="2012" name="Infect. Immun.">
        <title>YghG (GspSbeta) is a novel pilot protein required for localization of the GspSbeta type II secretion system secretin of enterotoxigenic Escherichia coli.</title>
        <authorList>
            <person name="Strozen T.G."/>
            <person name="Li G."/>
            <person name="Howard S.P."/>
        </authorList>
    </citation>
    <scope>DISRUPTION PHENOTYPE</scope>
    <source>
        <strain>H10407 / ETEC</strain>
    </source>
</reference>
<accession>E3PJ90</accession>
<accession>Q2M9M2</accession>
<accession>Q46837</accession>
<accession>Q46838</accession>
<accession>Q6BF58</accession>
<sequence>MNKKFKYKKSLLAAILSATLLAGCDGGGSGSSSDTPPVDSGTGSLPEVKPDPTPNPEPTPEPTPDPEPTPEPIPDPEPTPEPEPEPVPTKTGYLTLGGSQRVTGATCNGESSDGFTFKPGEDVTCVAGNTTIATFNTQSEAARSLRAVEKVSFSLEDAQELAGSDDKKSNAVSLVTSSNSCPANTEQVCLTFSSVIESKRFDSLYKQIDLAPEEFKKLVNEEVENNAATDKAPSTHTSPVVPVTTPGTKPDLNASFVSANAEQFYQYQPTEIILSEGRLVDSQGYGVAGVNYYTNSGRGVTGENGEFSFSWGEAISFGIDTFELGSVRGNKSTIALTELGDEVRGANIDQLIHRYSTTGQNNTRVVPDDVRKVFAEYPNVINEIINLSLSNGATLGEGEQVVNLPNEFIEQFNTGQAKEIDTAICAKTDGCNEARWFSLTTRNVNDGQIQGVINKLWGVDTNYKSVSKFHVFHDSTNFYGSTGNARGQAVVNISNAAFPILMARNDKNYWLAFGEKRAWDKNELAYITEAPSIVRPENVTRETASFNLPFISLGQVGDGKLMVIGNPHYNSILRCPNGYSWNGGVNKDGQCTLNSDPDDMKNFMENVLRYLSNDRWLPDAKSSMTVGTNLETVYFKKHGQVLGNSAPFAFHKDFTGITVKPMTSYGNLNPDEVPLLILNGFEYVTQWGSDPYSIPLRADTSKPKLTQQDVTDLIAYMNKGGSVLIMENVMSNLKEESASGFVRLLDAAGLSMALNKSVVNNDPQGYPDRVRQRRSTPIWVYERYPAVDGKPPYTIDDTTKEVIWKYQQENKPDDKPKLEVASWQEEVEGKQVTQFAFIDEADHKTPESLAAAKQRILDAFPGLEVCKDSDYHYEVNCLEYRPGTDVPVTGGMYVPQYTQLDLSADTAKAMLQAADLGTNIQRLYQHELYFRTNGRQGERLNSVDLERLYQNMSVWLWNETKYRYEEGKEDELGFKTFTEFLNCYTNNAYVGTQCSAELKKSLIDNKMIYGEESSKAGMMNPSYPLNYMEKPLTRLMLGRSWWDLNIKVDVEKYPGVVNTNGETVTQNINLYSAPTKWFAGNMQSTGLWAPAQQEVSIESKSTVPVTVTVALADDLTGREKHEVSLNRPPRVTKTYDLKANDKVTFKVPYGGLIYIKGDSKEVQSADFTFTGVVKAPFYKDGKWQHDLNSPAPLGELESASFVYTTPKKNLNASNYTGGLEQFANDLDTFASSMNDFYGRDSEDGKHRMFTYKNLPGHKHRFANDVQISIGDAHSGYPVMNSSFSPNSTTLPTTPLNDWLIWHEVGHNAAETPLTVPGATEVANNVLALYMQDRYLGKMNRVADDITVAPEYLEESNGQAWARGGAGDRLLMYAQLKEWAEKNFDIKKWYPDGTPLPEFYSEREGMKGWNLFQLMHRKARGDEVSNDKFGGKNYCAESNGNAADTLMLCASWVAQTDLSEFFKKWNPGANAYQLPGASEMSFEGGVSQSAYNTLASLDLPKPEQGPETINQVTEHKMSAE</sequence>
<evidence type="ECO:0000255" key="1">
    <source>
        <dbReference type="PROSITE-ProRule" id="PRU00303"/>
    </source>
</evidence>
<evidence type="ECO:0000255" key="2">
    <source>
        <dbReference type="PROSITE-ProRule" id="PRU01060"/>
    </source>
</evidence>
<evidence type="ECO:0000256" key="3">
    <source>
        <dbReference type="SAM" id="MobiDB-lite"/>
    </source>
</evidence>
<evidence type="ECO:0000269" key="4">
    <source>
    </source>
</evidence>
<evidence type="ECO:0000305" key="5"/>
<evidence type="ECO:0000305" key="6">
    <source>
    </source>
</evidence>
<evidence type="ECO:0000305" key="7">
    <source ref="2"/>
</evidence>
<feature type="signal peptide" evidence="1">
    <location>
        <begin position="1"/>
        <end position="23"/>
    </location>
</feature>
<feature type="chain" id="PRO_0000405305" description="Putative lipoprotein YghJ">
    <location>
        <begin position="24"/>
        <end position="1519"/>
    </location>
</feature>
<feature type="domain" description="Peptidase M60" evidence="2">
    <location>
        <begin position="1080"/>
        <end position="1380"/>
    </location>
</feature>
<feature type="region of interest" description="Disordered" evidence="3">
    <location>
        <begin position="22"/>
        <end position="107"/>
    </location>
</feature>
<feature type="region of interest" description="Disordered" evidence="3">
    <location>
        <begin position="226"/>
        <end position="247"/>
    </location>
</feature>
<feature type="region of interest" description="Disordered" evidence="3">
    <location>
        <begin position="1497"/>
        <end position="1519"/>
    </location>
</feature>
<feature type="compositionally biased region" description="Low complexity" evidence="3">
    <location>
        <begin position="31"/>
        <end position="42"/>
    </location>
</feature>
<feature type="compositionally biased region" description="Pro residues" evidence="3">
    <location>
        <begin position="51"/>
        <end position="77"/>
    </location>
</feature>
<feature type="compositionally biased region" description="Polar residues" evidence="3">
    <location>
        <begin position="97"/>
        <end position="107"/>
    </location>
</feature>
<feature type="compositionally biased region" description="Low complexity" evidence="3">
    <location>
        <begin position="234"/>
        <end position="247"/>
    </location>
</feature>
<feature type="lipid moiety-binding region" description="N-palmitoyl cysteine" evidence="1">
    <location>
        <position position="24"/>
    </location>
</feature>
<feature type="lipid moiety-binding region" description="S-diacylglycerol cysteine" evidence="1">
    <location>
        <position position="24"/>
    </location>
</feature>
<dbReference type="EMBL" id="FN649414">
    <property type="protein sequence ID" value="CBJ02741.1"/>
    <property type="molecule type" value="Genomic_DNA"/>
</dbReference>
<dbReference type="EMBL" id="AY056599">
    <property type="protein sequence ID" value="AAL10688.1"/>
    <property type="molecule type" value="Genomic_DNA"/>
</dbReference>
<dbReference type="RefSeq" id="WP_001034464.1">
    <property type="nucleotide sequence ID" value="NC_017633.1"/>
</dbReference>
<dbReference type="MEROPS" id="M98.001"/>
<dbReference type="KEGG" id="elh:ETEC_3241"/>
<dbReference type="HOGENOM" id="CLU_006312_0_0_6"/>
<dbReference type="PHI-base" id="PHI:7003"/>
<dbReference type="GO" id="GO:0005886">
    <property type="term" value="C:plasma membrane"/>
    <property type="evidence" value="ECO:0007669"/>
    <property type="project" value="UniProtKB-SubCell"/>
</dbReference>
<dbReference type="Gene3D" id="2.60.120.1250">
    <property type="entry name" value="Peptidase M60, enhancin-like domain 1"/>
    <property type="match status" value="1"/>
</dbReference>
<dbReference type="Gene3D" id="3.40.390.80">
    <property type="entry name" value="Peptidase M60, enhancin-like domain 2"/>
    <property type="match status" value="1"/>
</dbReference>
<dbReference type="Gene3D" id="1.10.390.30">
    <property type="entry name" value="Peptidase M60, enhancin-like domain 3"/>
    <property type="match status" value="1"/>
</dbReference>
<dbReference type="InterPro" id="IPR025385">
    <property type="entry name" value="DUF4092"/>
</dbReference>
<dbReference type="InterPro" id="IPR035423">
    <property type="entry name" value="M60-like_N"/>
</dbReference>
<dbReference type="InterPro" id="IPR042279">
    <property type="entry name" value="Pep_M60_3"/>
</dbReference>
<dbReference type="InterPro" id="IPR031161">
    <property type="entry name" value="Peptidase_M60_dom"/>
</dbReference>
<dbReference type="InterPro" id="IPR051244">
    <property type="entry name" value="TCAF"/>
</dbReference>
<dbReference type="NCBIfam" id="NF037973">
    <property type="entry name" value="metallo_SslE"/>
    <property type="match status" value="1"/>
</dbReference>
<dbReference type="NCBIfam" id="NF037974">
    <property type="entry name" value="SslE_AcfD_Zn_LP"/>
    <property type="match status" value="1"/>
</dbReference>
<dbReference type="PANTHER" id="PTHR15730">
    <property type="entry name" value="EXPERIMENTAL AUTOIMMUNE PROSTATITIS ANTIGEN 2-RELATED"/>
    <property type="match status" value="1"/>
</dbReference>
<dbReference type="PANTHER" id="PTHR15730:SF5">
    <property type="entry name" value="SI:CH211-210B2.2-RELATED"/>
    <property type="match status" value="1"/>
</dbReference>
<dbReference type="Pfam" id="PF13322">
    <property type="entry name" value="DUF4092"/>
    <property type="match status" value="1"/>
</dbReference>
<dbReference type="Pfam" id="PF17291">
    <property type="entry name" value="M60-like_N"/>
    <property type="match status" value="1"/>
</dbReference>
<dbReference type="Pfam" id="PF13402">
    <property type="entry name" value="Peptidase_M60"/>
    <property type="match status" value="1"/>
</dbReference>
<dbReference type="SMART" id="SM01276">
    <property type="entry name" value="M60-like"/>
    <property type="match status" value="1"/>
</dbReference>
<dbReference type="PROSITE" id="PS51723">
    <property type="entry name" value="PEPTIDASE_M60"/>
    <property type="match status" value="1"/>
</dbReference>
<dbReference type="PROSITE" id="PS51257">
    <property type="entry name" value="PROKAR_LIPOPROTEIN"/>
    <property type="match status" value="1"/>
</dbReference>
<keyword id="KW-1003">Cell membrane</keyword>
<keyword id="KW-0449">Lipoprotein</keyword>
<keyword id="KW-0472">Membrane</keyword>
<keyword id="KW-0564">Palmitate</keyword>
<keyword id="KW-0732">Signal</keyword>
<proteinExistence type="inferred from homology"/>
<comment type="function">
    <text evidence="7">May be a substrate of the type II secretion system beta (T2SS-beta).</text>
</comment>
<comment type="subcellular location">
    <subcellularLocation>
        <location evidence="1">Cell membrane</location>
        <topology evidence="1">Lipid-anchor</topology>
    </subcellularLocation>
</comment>
<comment type="disruption phenotype">
    <text evidence="4">No effect on assembly or function of T2SS-beta.</text>
</comment>
<comment type="miscellaneous">
    <text evidence="6">Encoded in a type II secretion system (T2SS-beta); this strain encodes 2 T2SS but only this one (beta) is expressed under standard laboratory conditions.</text>
</comment>
<comment type="similarity">
    <text evidence="5">To V.cholerae AcfD (VC_0845).</text>
</comment>
<organism>
    <name type="scientific">Escherichia coli O78:H11 (strain H10407 / ETEC)</name>
    <dbReference type="NCBI Taxonomy" id="316401"/>
    <lineage>
        <taxon>Bacteria</taxon>
        <taxon>Pseudomonadati</taxon>
        <taxon>Pseudomonadota</taxon>
        <taxon>Gammaproteobacteria</taxon>
        <taxon>Enterobacterales</taxon>
        <taxon>Enterobacteriaceae</taxon>
        <taxon>Escherichia</taxon>
    </lineage>
</organism>
<name>ACFD_ECOH1</name>
<protein>
    <recommendedName>
        <fullName>Putative lipoprotein YghJ</fullName>
    </recommendedName>
    <alternativeName>
        <fullName>Putative lipoprotein AcfD homolog</fullName>
    </alternativeName>
</protein>